<dbReference type="EMBL" id="AE000782">
    <property type="protein sequence ID" value="AAB90194.1"/>
    <property type="molecule type" value="Genomic_DNA"/>
</dbReference>
<dbReference type="PIR" id="C69381">
    <property type="entry name" value="C69381"/>
</dbReference>
<dbReference type="SMR" id="O29211"/>
<dbReference type="STRING" id="224325.AF_1051"/>
<dbReference type="PaxDb" id="224325-AF_1051"/>
<dbReference type="DNASU" id="1484274"/>
<dbReference type="EnsemblBacteria" id="AAB90194">
    <property type="protein sequence ID" value="AAB90194"/>
    <property type="gene ID" value="AF_1051"/>
</dbReference>
<dbReference type="KEGG" id="afu:AF_1051"/>
<dbReference type="eggNOG" id="arCOG01824">
    <property type="taxonomic scope" value="Archaea"/>
</dbReference>
<dbReference type="HOGENOM" id="CLU_131313_0_0_2"/>
<dbReference type="OrthoDB" id="132297at2157"/>
<dbReference type="PhylomeDB" id="O29211"/>
<dbReference type="Proteomes" id="UP000002199">
    <property type="component" value="Chromosome"/>
</dbReference>
<dbReference type="GO" id="GO:0005198">
    <property type="term" value="F:structural molecule activity"/>
    <property type="evidence" value="ECO:0007669"/>
    <property type="project" value="InterPro"/>
</dbReference>
<dbReference type="GO" id="GO:0097588">
    <property type="term" value="P:archaeal or bacterial-type flagellum-dependent cell motility"/>
    <property type="evidence" value="ECO:0007669"/>
    <property type="project" value="InterPro"/>
</dbReference>
<dbReference type="InterPro" id="IPR002774">
    <property type="entry name" value="Flagellin_arc"/>
</dbReference>
<dbReference type="Pfam" id="PF01917">
    <property type="entry name" value="Arch_flagellin"/>
    <property type="match status" value="1"/>
</dbReference>
<proteinExistence type="inferred from homology"/>
<feature type="signal peptide" evidence="1">
    <location>
        <begin position="1"/>
        <end position="35"/>
    </location>
</feature>
<feature type="chain" id="PRO_0000013650" description="Uncharacterized protein AF_1051">
    <location>
        <begin position="36"/>
        <end position="161"/>
    </location>
</feature>
<keyword id="KW-1185">Reference proteome</keyword>
<keyword id="KW-0732">Signal</keyword>
<sequence>MVMAMGFDTVVAAIMATAIIVAVAYTFLAGSTSIAELSVESYKDAVNSAVKKLRSDIEILSVSYDNSTSKIVAYFKNTGDERYPDFSEFDAIVYGRTSGGEMVSFYVNSTVFSITNELINPGIFDPQEVAKLEAVQPLQNGTYVLLICTPNAVCDSADFSV</sequence>
<organism>
    <name type="scientific">Archaeoglobus fulgidus (strain ATCC 49558 / DSM 4304 / JCM 9628 / NBRC 100126 / VC-16)</name>
    <dbReference type="NCBI Taxonomy" id="224325"/>
    <lineage>
        <taxon>Archaea</taxon>
        <taxon>Methanobacteriati</taxon>
        <taxon>Methanobacteriota</taxon>
        <taxon>Archaeoglobi</taxon>
        <taxon>Archaeoglobales</taxon>
        <taxon>Archaeoglobaceae</taxon>
        <taxon>Archaeoglobus</taxon>
    </lineage>
</organism>
<name>Y1051_ARCFU</name>
<reference key="1">
    <citation type="journal article" date="1997" name="Nature">
        <title>The complete genome sequence of the hyperthermophilic, sulphate-reducing archaeon Archaeoglobus fulgidus.</title>
        <authorList>
            <person name="Klenk H.-P."/>
            <person name="Clayton R.A."/>
            <person name="Tomb J.-F."/>
            <person name="White O."/>
            <person name="Nelson K.E."/>
            <person name="Ketchum K.A."/>
            <person name="Dodson R.J."/>
            <person name="Gwinn M.L."/>
            <person name="Hickey E.K."/>
            <person name="Peterson J.D."/>
            <person name="Richardson D.L."/>
            <person name="Kerlavage A.R."/>
            <person name="Graham D.E."/>
            <person name="Kyrpides N.C."/>
            <person name="Fleischmann R.D."/>
            <person name="Quackenbush J."/>
            <person name="Lee N.H."/>
            <person name="Sutton G.G."/>
            <person name="Gill S.R."/>
            <person name="Kirkness E.F."/>
            <person name="Dougherty B.A."/>
            <person name="McKenney K."/>
            <person name="Adams M.D."/>
            <person name="Loftus B.J."/>
            <person name="Peterson S.N."/>
            <person name="Reich C.I."/>
            <person name="McNeil L.K."/>
            <person name="Badger J.H."/>
            <person name="Glodek A."/>
            <person name="Zhou L."/>
            <person name="Overbeek R."/>
            <person name="Gocayne J.D."/>
            <person name="Weidman J.F."/>
            <person name="McDonald L.A."/>
            <person name="Utterback T.R."/>
            <person name="Cotton M.D."/>
            <person name="Spriggs T."/>
            <person name="Artiach P."/>
            <person name="Kaine B.P."/>
            <person name="Sykes S.M."/>
            <person name="Sadow P.W."/>
            <person name="D'Andrea K.P."/>
            <person name="Bowman C."/>
            <person name="Fujii C."/>
            <person name="Garland S.A."/>
            <person name="Mason T.M."/>
            <person name="Olsen G.J."/>
            <person name="Fraser C.M."/>
            <person name="Smith H.O."/>
            <person name="Woese C.R."/>
            <person name="Venter J.C."/>
        </authorList>
    </citation>
    <scope>NUCLEOTIDE SEQUENCE [LARGE SCALE GENOMIC DNA]</scope>
    <source>
        <strain>ATCC 49558 / DSM 4304 / JCM 9628 / NBRC 100126 / VC-16</strain>
    </source>
</reference>
<gene>
    <name type="ordered locus">AF_1051</name>
</gene>
<accession>O29211</accession>
<evidence type="ECO:0000255" key="1"/>
<protein>
    <recommendedName>
        <fullName>Uncharacterized protein AF_1051</fullName>
    </recommendedName>
</protein>